<feature type="chain" id="PRO_0000075814" description="Protein lin-11">
    <location>
        <begin position="1"/>
        <end position="405"/>
    </location>
</feature>
<feature type="domain" description="LIM zinc-binding 1" evidence="2">
    <location>
        <begin position="68"/>
        <end position="124"/>
    </location>
</feature>
<feature type="domain" description="LIM zinc-binding 2" evidence="2">
    <location>
        <begin position="127"/>
        <end position="187"/>
    </location>
</feature>
<feature type="DNA-binding region" description="Homeobox" evidence="1">
    <location>
        <begin position="241"/>
        <end position="300"/>
    </location>
</feature>
<feature type="region of interest" description="Disordered" evidence="3">
    <location>
        <begin position="189"/>
        <end position="208"/>
    </location>
</feature>
<feature type="region of interest" description="Disordered" evidence="3">
    <location>
        <begin position="224"/>
        <end position="246"/>
    </location>
</feature>
<feature type="compositionally biased region" description="Polar residues" evidence="3">
    <location>
        <begin position="189"/>
        <end position="205"/>
    </location>
</feature>
<feature type="cross-link" description="Glycyl lysine isopeptide (Lys-Gly) (interchain with G-Cter in SUMO)" evidence="8">
    <location>
        <position position="17"/>
    </location>
</feature>
<feature type="cross-link" description="Glycyl lysine isopeptide (Lys-Gly) (interchain with G-Cter in SUMO)" evidence="8">
    <location>
        <position position="18"/>
    </location>
</feature>
<evidence type="ECO:0000255" key="1">
    <source>
        <dbReference type="PROSITE-ProRule" id="PRU00108"/>
    </source>
</evidence>
<evidence type="ECO:0000255" key="2">
    <source>
        <dbReference type="PROSITE-ProRule" id="PRU00125"/>
    </source>
</evidence>
<evidence type="ECO:0000256" key="3">
    <source>
        <dbReference type="SAM" id="MobiDB-lite"/>
    </source>
</evidence>
<evidence type="ECO:0000269" key="4">
    <source>
    </source>
</evidence>
<evidence type="ECO:0000269" key="5">
    <source>
    </source>
</evidence>
<evidence type="ECO:0000269" key="6">
    <source>
    </source>
</evidence>
<evidence type="ECO:0000269" key="7">
    <source>
    </source>
</evidence>
<evidence type="ECO:0000305" key="8"/>
<sequence length="405" mass="45777">MHSSSSFIITSLEEEEKKPPAHHLHQQSIEDVGSVTSSATLLLLDSATWMMPSSTTQPHISEISGNECAACAQPILDRYVFTVLGKCWHQSCLRCCDCRAPMSMTCFSRDGLILCKTDFSRRYSQRCAGCDGKLEKEDLVRRARDKVFHIRCFQCSVCQRLLDTGDQLYIMEGNRFVCQSDFQTATKTSTPTSIHRPVSNGSECNSDVEEDNVDACDEVGLDDGEGDCGKDNSDDSNSAKRRGPRTTIKAKQLETLKNAFAATPKPTRHIREQLAAETGLNMRVIQVWFQNRRSKERRMKQLRFGGYRQSRRPRRDDIVDMFPNDQQFYPPPPPSNVQFFCDPYTTSPNNPETIQMAPQFAVPTENMNMVPEPYTEQSATPPEFNEDTFACIYSTDLGKPTPVSW</sequence>
<reference key="1">
    <citation type="journal article" date="1998" name="Science">
        <title>Genome sequence of the nematode C. elegans: a platform for investigating biology.</title>
        <authorList>
            <consortium name="The C. elegans sequencing consortium"/>
        </authorList>
    </citation>
    <scope>NUCLEOTIDE SEQUENCE [LARGE SCALE GENOMIC DNA]</scope>
    <source>
        <strain>Bristol N2</strain>
    </source>
</reference>
<reference key="2">
    <citation type="journal article" date="1990" name="Nature">
        <title>Novel cysteine-rich motif and homeodomain in the product of the Caenorhabditis elegans cell lineage gene lin-11.</title>
        <authorList>
            <person name="Freyd G."/>
            <person name="Kim S.K."/>
            <person name="Horvitz H.R."/>
        </authorList>
    </citation>
    <scope>NUCLEOTIDE SEQUENCE [MRNA] OF 24-405</scope>
    <scope>FUNCTION</scope>
    <source>
        <strain>Bristol N2</strain>
    </source>
</reference>
<reference key="3">
    <citation type="journal article" date="1991" name="Proc. Natl. Acad. Sci. U.S.A.">
        <title>The LIM region of a presumptive Caenorhabditis elegans transcription factor is an iron-sulfur- and zinc-containing metallodomain.</title>
        <authorList>
            <person name="Li P.M."/>
            <person name="Reichert J."/>
            <person name="Freyd G."/>
            <person name="Horvitz H.R."/>
            <person name="Walsh C.T."/>
        </authorList>
    </citation>
    <scope>CHARACTERIZATION OF LIM DOMAIN METAL-BINDING</scope>
</reference>
<reference key="4">
    <citation type="journal article" date="2004" name="Genes Dev.">
        <title>The small ubiquitin-like modifier (SUMO) is required for gonadal and uterine-vulval morphogenesis in Caenorhabditis elegans.</title>
        <authorList>
            <person name="Broday L."/>
            <person name="Kolotuev I."/>
            <person name="Didier C."/>
            <person name="Bhoumik A."/>
            <person name="Gupta B.P."/>
            <person name="Sternberg P.W."/>
            <person name="Podbilewicz B."/>
            <person name="Ronai Z."/>
        </authorList>
    </citation>
    <scope>FUNCTION</scope>
    <scope>SUMOYLATION AT LYS-17 AND LYS-18</scope>
</reference>
<reference key="5">
    <citation type="journal article" date="2009" name="Nat. Neurosci.">
        <title>A trophic role for Wnt-Ror kinase signaling during developmental pruning in Caenorhabditis elegans.</title>
        <authorList>
            <person name="Hayashi Y."/>
            <person name="Hirotsu T."/>
            <person name="Iwata R."/>
            <person name="Kage-Nakadai E."/>
            <person name="Kunitomo H."/>
            <person name="Ishihara T."/>
            <person name="Iino Y."/>
            <person name="Kubo T."/>
        </authorList>
    </citation>
    <scope>FUNCTION</scope>
    <scope>TISSUE SPECIFICITY</scope>
</reference>
<reference key="6">
    <citation type="journal article" date="2018" name="PLoS Biol.">
        <title>Unconventional function of an Achaete-Scute homolog as a terminal selector of nociceptive neuron identity.</title>
        <authorList>
            <person name="Masoudi N."/>
            <person name="Tavazoie S."/>
            <person name="Glenwinkel L."/>
            <person name="Ryu L."/>
            <person name="Kim K."/>
            <person name="Hobert O."/>
        </authorList>
    </citation>
    <scope>FUNCTION</scope>
</reference>
<proteinExistence type="evidence at protein level"/>
<dbReference type="EMBL" id="Z80221">
    <property type="protein sequence ID" value="CAB02310.1"/>
    <property type="molecule type" value="Genomic_DNA"/>
</dbReference>
<dbReference type="EMBL" id="X54355">
    <property type="protein sequence ID" value="CAA38240.1"/>
    <property type="molecule type" value="mRNA"/>
</dbReference>
<dbReference type="PIR" id="T27509">
    <property type="entry name" value="T27509"/>
</dbReference>
<dbReference type="RefSeq" id="NP_492696.1">
    <property type="nucleotide sequence ID" value="NM_060295.6"/>
</dbReference>
<dbReference type="SMR" id="P20154"/>
<dbReference type="BioGRID" id="38311">
    <property type="interactions" value="29"/>
</dbReference>
<dbReference type="FunCoup" id="P20154">
    <property type="interactions" value="91"/>
</dbReference>
<dbReference type="IntAct" id="P20154">
    <property type="interactions" value="26"/>
</dbReference>
<dbReference type="STRING" id="6239.ZC247.3.1"/>
<dbReference type="PaxDb" id="6239-ZC247.3"/>
<dbReference type="PeptideAtlas" id="P20154"/>
<dbReference type="EnsemblMetazoa" id="ZC247.3.1">
    <property type="protein sequence ID" value="ZC247.3.1"/>
    <property type="gene ID" value="WBGene00003000"/>
</dbReference>
<dbReference type="GeneID" id="172893"/>
<dbReference type="KEGG" id="cel:CELE_ZC247.3"/>
<dbReference type="UCSC" id="ZC247.3">
    <property type="organism name" value="c. elegans"/>
</dbReference>
<dbReference type="AGR" id="WB:WBGene00003000"/>
<dbReference type="CTD" id="172893"/>
<dbReference type="WormBase" id="ZC247.3">
    <property type="protein sequence ID" value="CE15150"/>
    <property type="gene ID" value="WBGene00003000"/>
    <property type="gene designation" value="lin-11"/>
</dbReference>
<dbReference type="eggNOG" id="KOG0490">
    <property type="taxonomic scope" value="Eukaryota"/>
</dbReference>
<dbReference type="GeneTree" id="ENSGT00940000164085"/>
<dbReference type="HOGENOM" id="CLU_662657_0_0_1"/>
<dbReference type="InParanoid" id="P20154"/>
<dbReference type="OMA" id="NDQQFYP"/>
<dbReference type="OrthoDB" id="10068367at2759"/>
<dbReference type="PhylomeDB" id="P20154"/>
<dbReference type="SignaLink" id="P20154"/>
<dbReference type="PRO" id="PR:P20154"/>
<dbReference type="Proteomes" id="UP000001940">
    <property type="component" value="Chromosome I"/>
</dbReference>
<dbReference type="Bgee" id="WBGene00003000">
    <property type="expression patterns" value="Expressed in pharyngeal muscle cell (C elegans) and 3 other cell types or tissues"/>
</dbReference>
<dbReference type="GO" id="GO:0005634">
    <property type="term" value="C:nucleus"/>
    <property type="evidence" value="ECO:0000318"/>
    <property type="project" value="GO_Central"/>
</dbReference>
<dbReference type="GO" id="GO:0003700">
    <property type="term" value="F:DNA-binding transcription factor activity"/>
    <property type="evidence" value="ECO:0000250"/>
    <property type="project" value="WormBase"/>
</dbReference>
<dbReference type="GO" id="GO:0000981">
    <property type="term" value="F:DNA-binding transcription factor activity, RNA polymerase II-specific"/>
    <property type="evidence" value="ECO:0000318"/>
    <property type="project" value="GO_Central"/>
</dbReference>
<dbReference type="GO" id="GO:0000977">
    <property type="term" value="F:RNA polymerase II transcription regulatory region sequence-specific DNA binding"/>
    <property type="evidence" value="ECO:0000318"/>
    <property type="project" value="GO_Central"/>
</dbReference>
<dbReference type="GO" id="GO:0008270">
    <property type="term" value="F:zinc ion binding"/>
    <property type="evidence" value="ECO:0007669"/>
    <property type="project" value="InterPro"/>
</dbReference>
<dbReference type="GO" id="GO:0007413">
    <property type="term" value="P:axonal fasciculation"/>
    <property type="evidence" value="ECO:0000315"/>
    <property type="project" value="WormBase"/>
</dbReference>
<dbReference type="GO" id="GO:0001708">
    <property type="term" value="P:cell fate specification"/>
    <property type="evidence" value="ECO:0000315"/>
    <property type="project" value="WormBase"/>
</dbReference>
<dbReference type="GO" id="GO:0018991">
    <property type="term" value="P:egg-laying behavior"/>
    <property type="evidence" value="ECO:0000315"/>
    <property type="project" value="WormBase"/>
</dbReference>
<dbReference type="GO" id="GO:0030182">
    <property type="term" value="P:neuron differentiation"/>
    <property type="evidence" value="ECO:0000318"/>
    <property type="project" value="GO_Central"/>
</dbReference>
<dbReference type="GO" id="GO:0040026">
    <property type="term" value="P:positive regulation of vulval development"/>
    <property type="evidence" value="ECO:0000315"/>
    <property type="project" value="UniProtKB"/>
</dbReference>
<dbReference type="GO" id="GO:0045595">
    <property type="term" value="P:regulation of cell differentiation"/>
    <property type="evidence" value="ECO:0000315"/>
    <property type="project" value="UniProtKB"/>
</dbReference>
<dbReference type="GO" id="GO:0030334">
    <property type="term" value="P:regulation of cell migration"/>
    <property type="evidence" value="ECO:0000315"/>
    <property type="project" value="WormBase"/>
</dbReference>
<dbReference type="GO" id="GO:0006357">
    <property type="term" value="P:regulation of transcription by RNA polymerase II"/>
    <property type="evidence" value="ECO:0000318"/>
    <property type="project" value="GO_Central"/>
</dbReference>
<dbReference type="CDD" id="cd00086">
    <property type="entry name" value="homeodomain"/>
    <property type="match status" value="1"/>
</dbReference>
<dbReference type="CDD" id="cd09375">
    <property type="entry name" value="LIM2_Lhx1_Lhx5"/>
    <property type="match status" value="1"/>
</dbReference>
<dbReference type="FunFam" id="2.10.110.10:FF:000147">
    <property type="entry name" value="LIM/homeobox protein Awh-like protein"/>
    <property type="match status" value="1"/>
</dbReference>
<dbReference type="FunFam" id="1.10.10.60:FF:000075">
    <property type="entry name" value="LIM/homeobox protein Lhx1"/>
    <property type="match status" value="1"/>
</dbReference>
<dbReference type="FunFam" id="2.10.110.10:FF:000137">
    <property type="entry name" value="Mechanosensory protein 3"/>
    <property type="match status" value="1"/>
</dbReference>
<dbReference type="Gene3D" id="2.10.110.10">
    <property type="entry name" value="Cysteine Rich Protein"/>
    <property type="match status" value="2"/>
</dbReference>
<dbReference type="Gene3D" id="1.10.10.60">
    <property type="entry name" value="Homeodomain-like"/>
    <property type="match status" value="1"/>
</dbReference>
<dbReference type="InterPro" id="IPR001356">
    <property type="entry name" value="HD"/>
</dbReference>
<dbReference type="InterPro" id="IPR017970">
    <property type="entry name" value="Homeobox_CS"/>
</dbReference>
<dbReference type="InterPro" id="IPR009057">
    <property type="entry name" value="Homeodomain-like_sf"/>
</dbReference>
<dbReference type="InterPro" id="IPR049619">
    <property type="entry name" value="Lhx1/5_LIM2"/>
</dbReference>
<dbReference type="InterPro" id="IPR050453">
    <property type="entry name" value="LIM_Homeobox_TF"/>
</dbReference>
<dbReference type="InterPro" id="IPR001781">
    <property type="entry name" value="Znf_LIM"/>
</dbReference>
<dbReference type="PANTHER" id="PTHR24208:SF105">
    <property type="entry name" value="DLIM1"/>
    <property type="match status" value="1"/>
</dbReference>
<dbReference type="PANTHER" id="PTHR24208">
    <property type="entry name" value="LIM/HOMEOBOX PROTEIN LHX"/>
    <property type="match status" value="1"/>
</dbReference>
<dbReference type="Pfam" id="PF00046">
    <property type="entry name" value="Homeodomain"/>
    <property type="match status" value="1"/>
</dbReference>
<dbReference type="Pfam" id="PF00412">
    <property type="entry name" value="LIM"/>
    <property type="match status" value="2"/>
</dbReference>
<dbReference type="SMART" id="SM00389">
    <property type="entry name" value="HOX"/>
    <property type="match status" value="1"/>
</dbReference>
<dbReference type="SMART" id="SM00132">
    <property type="entry name" value="LIM"/>
    <property type="match status" value="2"/>
</dbReference>
<dbReference type="SUPFAM" id="SSF57716">
    <property type="entry name" value="Glucocorticoid receptor-like (DNA-binding domain)"/>
    <property type="match status" value="2"/>
</dbReference>
<dbReference type="SUPFAM" id="SSF46689">
    <property type="entry name" value="Homeodomain-like"/>
    <property type="match status" value="1"/>
</dbReference>
<dbReference type="PROSITE" id="PS00027">
    <property type="entry name" value="HOMEOBOX_1"/>
    <property type="match status" value="1"/>
</dbReference>
<dbReference type="PROSITE" id="PS50071">
    <property type="entry name" value="HOMEOBOX_2"/>
    <property type="match status" value="1"/>
</dbReference>
<dbReference type="PROSITE" id="PS00478">
    <property type="entry name" value="LIM_DOMAIN_1"/>
    <property type="match status" value="2"/>
</dbReference>
<dbReference type="PROSITE" id="PS50023">
    <property type="entry name" value="LIM_DOMAIN_2"/>
    <property type="match status" value="2"/>
</dbReference>
<protein>
    <recommendedName>
        <fullName>Protein lin-11</fullName>
    </recommendedName>
    <alternativeName>
        <fullName>Abnormal cell lineage protein 11</fullName>
    </alternativeName>
</protein>
<accession>P20154</accession>
<keyword id="KW-0217">Developmental protein</keyword>
<keyword id="KW-0238">DNA-binding</keyword>
<keyword id="KW-0371">Homeobox</keyword>
<keyword id="KW-1017">Isopeptide bond</keyword>
<keyword id="KW-0440">LIM domain</keyword>
<keyword id="KW-0479">Metal-binding</keyword>
<keyword id="KW-0539">Nucleus</keyword>
<keyword id="KW-1185">Reference proteome</keyword>
<keyword id="KW-0677">Repeat</keyword>
<keyword id="KW-0804">Transcription</keyword>
<keyword id="KW-0805">Transcription regulation</keyword>
<keyword id="KW-0832">Ubl conjugation</keyword>
<keyword id="KW-0862">Zinc</keyword>
<organism>
    <name type="scientific">Caenorhabditis elegans</name>
    <dbReference type="NCBI Taxonomy" id="6239"/>
    <lineage>
        <taxon>Eukaryota</taxon>
        <taxon>Metazoa</taxon>
        <taxon>Ecdysozoa</taxon>
        <taxon>Nematoda</taxon>
        <taxon>Chromadorea</taxon>
        <taxon>Rhabditida</taxon>
        <taxon>Rhabditina</taxon>
        <taxon>Rhabditomorpha</taxon>
        <taxon>Rhabditoidea</taxon>
        <taxon>Rhabditidae</taxon>
        <taxon>Peloderinae</taxon>
        <taxon>Caenorhabditis</taxon>
    </lineage>
</organism>
<comment type="function">
    <text evidence="4 5 6 7">Probable transcription factor which is required for asymmetric division of vulval blast cells (PubMed:15466489, PubMed:1970421). Involved in olfactory plasticity probably by regulating the expression of transcription factor mbr-1 in RIF neurons (PubMed:19561603). Plays a role in the chemorepulsive response toward ascaroside pheromones mediated by the ADL sensory neurons, probably by regulating E-box motif 5'-CANNTG-3' containing target genes in the ADL neurons (PubMed:29672507). Plays a role in the differentiation of the ADL sensory neurons (PubMed:29672507).</text>
</comment>
<comment type="subcellular location">
    <subcellularLocation>
        <location>Nucleus</location>
    </subcellularLocation>
</comment>
<comment type="tissue specificity">
    <text evidence="5">Expressed in ADL, AVJL, AIZL, RICL, RIF and AVG neurons.</text>
</comment>
<name>LIN11_CAEEL</name>
<gene>
    <name type="primary">lin-11</name>
    <name type="ORF">ZC247.3</name>
</gene>